<sequence>MDFKYTEEKELIKINNVMIHKYTILYTSNCILDISFGEDKITCFNNRLVFLERGVNISVRIQKQKLTEKPYVAFRLNENVLRHLKNTLMIIYGMSKIDSCECRGVSRKIMTTEVDKMLLNVLREMMGHHNDDSSFISALIYLISKIKCNDKIIESLYMSSITFFTDKVRGVIEKDLSRKWTLAIIADVFNVSEITIRKRLESEDTNFNQILMQSRMSKAALLLLENSYQISQISNMIGISSASYFIRIFNKHFGVTPKQFFNYFKGG</sequence>
<name>CSVR_ECOLX</name>
<keyword id="KW-0010">Activator</keyword>
<keyword id="KW-0238">DNA-binding</keyword>
<keyword id="KW-0614">Plasmid</keyword>
<keyword id="KW-0804">Transcription</keyword>
<keyword id="KW-0805">Transcription regulation</keyword>
<gene>
    <name evidence="4" type="primary">csvR</name>
</gene>
<comment type="function">
    <text evidence="3">Transcriptional activator of fimbrial genes in enterotoxigenic E.coli.</text>
</comment>
<comment type="subunit">
    <text evidence="1">Homodimer.</text>
</comment>
<comment type="sequence caution" evidence="5">
    <conflict type="frameshift">
        <sequence resource="EMBL-CDS" id="CAA42700"/>
    </conflict>
</comment>
<feature type="chain" id="PRO_0000194507" description="HTH-type transcriptional activator CsvR">
    <location>
        <begin position="1"/>
        <end position="267"/>
    </location>
</feature>
<feature type="DNA-binding region" description="H-T-H motif" evidence="2">
    <location>
        <begin position="183"/>
        <end position="204"/>
    </location>
</feature>
<feature type="DNA-binding region" description="H-T-H motif" evidence="2">
    <location>
        <begin position="230"/>
        <end position="253"/>
    </location>
</feature>
<evidence type="ECO:0000250" key="1">
    <source>
        <dbReference type="UniProtKB" id="P16114"/>
    </source>
</evidence>
<evidence type="ECO:0000255" key="2">
    <source>
        <dbReference type="PROSITE-ProRule" id="PRU00593"/>
    </source>
</evidence>
<evidence type="ECO:0000269" key="3">
    <source>
    </source>
</evidence>
<evidence type="ECO:0000303" key="4">
    <source>
    </source>
</evidence>
<evidence type="ECO:0000305" key="5"/>
<reference key="1">
    <citation type="journal article" date="1991" name="FEMS Microbiol. Lett.">
        <title>The nucleotide sequence of a regulatory gene present on a plasmid in an enterotoxigenic Escherichia coli strain of serotype O167:H5.</title>
        <authorList>
            <person name="de Haan L.A."/>
            <person name="Willshaw G.A."/>
            <person name="van der Zeijst B.A.M."/>
            <person name="Gaastra W."/>
        </authorList>
    </citation>
    <scope>NUCLEOTIDE SEQUENCE [GENOMIC DNA]</scope>
    <scope>FUNCTION</scope>
    <source>
        <strain>O167:H5 / E10703 / EIEC</strain>
        <plasmid>PDEP3</plasmid>
    </source>
</reference>
<geneLocation type="plasmid">
    <name>PDEP3</name>
</geneLocation>
<protein>
    <recommendedName>
        <fullName evidence="4">HTH-type transcriptional activator CsvR</fullName>
    </recommendedName>
</protein>
<dbReference type="EMBL" id="X60106">
    <property type="protein sequence ID" value="CAA42700.1"/>
    <property type="status" value="ALT_FRAME"/>
    <property type="molecule type" value="Genomic_DNA"/>
</dbReference>
<dbReference type="PIR" id="S20081">
    <property type="entry name" value="S20081"/>
</dbReference>
<dbReference type="RefSeq" id="WP_000346360.1">
    <property type="nucleotide sequence ID" value="NZ_UGCI01000001.1"/>
</dbReference>
<dbReference type="RefSeq" id="YP_008531413.1">
    <property type="nucleotide sequence ID" value="NC_022333.1"/>
</dbReference>
<dbReference type="SMR" id="P43460"/>
<dbReference type="GO" id="GO:0003700">
    <property type="term" value="F:DNA-binding transcription factor activity"/>
    <property type="evidence" value="ECO:0007669"/>
    <property type="project" value="InterPro"/>
</dbReference>
<dbReference type="GO" id="GO:0043565">
    <property type="term" value="F:sequence-specific DNA binding"/>
    <property type="evidence" value="ECO:0007669"/>
    <property type="project" value="InterPro"/>
</dbReference>
<dbReference type="Gene3D" id="1.10.10.60">
    <property type="entry name" value="Homeodomain-like"/>
    <property type="match status" value="1"/>
</dbReference>
<dbReference type="InterPro" id="IPR009057">
    <property type="entry name" value="Homeodomain-like_sf"/>
</dbReference>
<dbReference type="InterPro" id="IPR018060">
    <property type="entry name" value="HTH_AraC"/>
</dbReference>
<dbReference type="InterPro" id="IPR018062">
    <property type="entry name" value="HTH_AraC-typ_CS"/>
</dbReference>
<dbReference type="InterPro" id="IPR020449">
    <property type="entry name" value="Tscrpt_reg_AraC-type_HTH"/>
</dbReference>
<dbReference type="PANTHER" id="PTHR43280">
    <property type="entry name" value="ARAC-FAMILY TRANSCRIPTIONAL REGULATOR"/>
    <property type="match status" value="1"/>
</dbReference>
<dbReference type="PANTHER" id="PTHR43280:SF2">
    <property type="entry name" value="HTH-TYPE TRANSCRIPTIONAL REGULATOR EXSA"/>
    <property type="match status" value="1"/>
</dbReference>
<dbReference type="Pfam" id="PF12833">
    <property type="entry name" value="HTH_18"/>
    <property type="match status" value="1"/>
</dbReference>
<dbReference type="PRINTS" id="PR00032">
    <property type="entry name" value="HTHARAC"/>
</dbReference>
<dbReference type="SMART" id="SM00342">
    <property type="entry name" value="HTH_ARAC"/>
    <property type="match status" value="1"/>
</dbReference>
<dbReference type="SUPFAM" id="SSF46689">
    <property type="entry name" value="Homeodomain-like"/>
    <property type="match status" value="1"/>
</dbReference>
<dbReference type="PROSITE" id="PS00041">
    <property type="entry name" value="HTH_ARAC_FAMILY_1"/>
    <property type="match status" value="1"/>
</dbReference>
<dbReference type="PROSITE" id="PS01124">
    <property type="entry name" value="HTH_ARAC_FAMILY_2"/>
    <property type="match status" value="1"/>
</dbReference>
<accession>P43460</accession>
<proteinExistence type="inferred from homology"/>
<organism>
    <name type="scientific">Escherichia coli</name>
    <dbReference type="NCBI Taxonomy" id="562"/>
    <lineage>
        <taxon>Bacteria</taxon>
        <taxon>Pseudomonadati</taxon>
        <taxon>Pseudomonadota</taxon>
        <taxon>Gammaproteobacteria</taxon>
        <taxon>Enterobacterales</taxon>
        <taxon>Enterobacteriaceae</taxon>
        <taxon>Escherichia</taxon>
    </lineage>
</organism>